<proteinExistence type="inferred from homology"/>
<reference key="1">
    <citation type="journal article" date="2005" name="Genome Res.">
        <title>Comparative and functional genomic analyses of the pathogenicity of phytopathogen Xanthomonas campestris pv. campestris.</title>
        <authorList>
            <person name="Qian W."/>
            <person name="Jia Y."/>
            <person name="Ren S.-X."/>
            <person name="He Y.-Q."/>
            <person name="Feng J.-X."/>
            <person name="Lu L.-F."/>
            <person name="Sun Q."/>
            <person name="Ying G."/>
            <person name="Tang D.-J."/>
            <person name="Tang H."/>
            <person name="Wu W."/>
            <person name="Hao P."/>
            <person name="Wang L."/>
            <person name="Jiang B.-L."/>
            <person name="Zeng S."/>
            <person name="Gu W.-Y."/>
            <person name="Lu G."/>
            <person name="Rong L."/>
            <person name="Tian Y."/>
            <person name="Yao Z."/>
            <person name="Fu G."/>
            <person name="Chen B."/>
            <person name="Fang R."/>
            <person name="Qiang B."/>
            <person name="Chen Z."/>
            <person name="Zhao G.-P."/>
            <person name="Tang J.-L."/>
            <person name="He C."/>
        </authorList>
    </citation>
    <scope>NUCLEOTIDE SEQUENCE [LARGE SCALE GENOMIC DNA]</scope>
    <source>
        <strain>8004</strain>
    </source>
</reference>
<protein>
    <recommendedName>
        <fullName evidence="1">GTPase Der</fullName>
    </recommendedName>
    <alternativeName>
        <fullName evidence="1">GTP-binding protein EngA</fullName>
    </alternativeName>
</protein>
<gene>
    <name evidence="1" type="primary">der</name>
    <name type="synonym">engA</name>
    <name type="ordered locus">XC_2197</name>
</gene>
<keyword id="KW-0342">GTP-binding</keyword>
<keyword id="KW-0547">Nucleotide-binding</keyword>
<keyword id="KW-0677">Repeat</keyword>
<keyword id="KW-0690">Ribosome biogenesis</keyword>
<sequence length="465" mass="51274">MLPLVALVGRPNVGKSTIFNALTRTRDALVHDQPGVTRDRNYGVCRLDEQQPFIVVDTGGIAGDEEGLAGATARQARAAAGEADLVLFVVDGREGASSLDDEILAWLRKLARPTVLVINKIDGTDEESVRSEFSRYGFSDVVALSAAHRQGIDDLLEEVGARLPEEGAGELLDNDPARVRIAFVGRPNVGKSTLVNRLLGEERMIASEVPGTTRDSIAVDLERDGRQYRLIDTAGLRRRGKVEEAVEKFSAFKTLQAIEQCQVAVLMLDATEGVTDQDATILGAILDAGRALVVAINKWDGQSDYQRAQAEDLLSRKLGFVNWAEAVRISALHGSGMRELFQAIHRAHASATHEFSTSEVNQALEIAYETNPPPSIRGHVSKLRYVHPGGANPPTFIVHGTRLKVLPESYKRYLENFFRKRFKLVGTPVRFIFREGANPYEGKKNPLSDRQIARKRRLMRHVKGK</sequence>
<comment type="function">
    <text evidence="1">GTPase that plays an essential role in the late steps of ribosome biogenesis.</text>
</comment>
<comment type="subunit">
    <text evidence="1">Associates with the 50S ribosomal subunit.</text>
</comment>
<comment type="similarity">
    <text evidence="1">Belongs to the TRAFAC class TrmE-Era-EngA-EngB-Septin-like GTPase superfamily. EngA (Der) GTPase family.</text>
</comment>
<name>DER_XANC8</name>
<accession>Q4UUM0</accession>
<dbReference type="EMBL" id="CP000050">
    <property type="protein sequence ID" value="AAY49253.1"/>
    <property type="molecule type" value="Genomic_DNA"/>
</dbReference>
<dbReference type="RefSeq" id="WP_011037150.1">
    <property type="nucleotide sequence ID" value="NZ_CP155948.1"/>
</dbReference>
<dbReference type="SMR" id="Q4UUM0"/>
<dbReference type="GeneID" id="58013458"/>
<dbReference type="KEGG" id="xcb:XC_2197"/>
<dbReference type="HOGENOM" id="CLU_016077_6_2_6"/>
<dbReference type="Proteomes" id="UP000000420">
    <property type="component" value="Chromosome"/>
</dbReference>
<dbReference type="GO" id="GO:0016887">
    <property type="term" value="F:ATP hydrolysis activity"/>
    <property type="evidence" value="ECO:0007669"/>
    <property type="project" value="InterPro"/>
</dbReference>
<dbReference type="GO" id="GO:0005525">
    <property type="term" value="F:GTP binding"/>
    <property type="evidence" value="ECO:0007669"/>
    <property type="project" value="UniProtKB-UniRule"/>
</dbReference>
<dbReference type="GO" id="GO:0043022">
    <property type="term" value="F:ribosome binding"/>
    <property type="evidence" value="ECO:0007669"/>
    <property type="project" value="TreeGrafter"/>
</dbReference>
<dbReference type="GO" id="GO:0042254">
    <property type="term" value="P:ribosome biogenesis"/>
    <property type="evidence" value="ECO:0007669"/>
    <property type="project" value="UniProtKB-KW"/>
</dbReference>
<dbReference type="CDD" id="cd01894">
    <property type="entry name" value="EngA1"/>
    <property type="match status" value="1"/>
</dbReference>
<dbReference type="CDD" id="cd01895">
    <property type="entry name" value="EngA2"/>
    <property type="match status" value="1"/>
</dbReference>
<dbReference type="FunFam" id="3.30.300.20:FF:000004">
    <property type="entry name" value="GTPase Der"/>
    <property type="match status" value="1"/>
</dbReference>
<dbReference type="FunFam" id="3.40.50.300:FF:000040">
    <property type="entry name" value="GTPase Der"/>
    <property type="match status" value="1"/>
</dbReference>
<dbReference type="FunFam" id="3.40.50.300:FF:000057">
    <property type="entry name" value="GTPase Der"/>
    <property type="match status" value="1"/>
</dbReference>
<dbReference type="Gene3D" id="3.30.300.20">
    <property type="match status" value="1"/>
</dbReference>
<dbReference type="Gene3D" id="3.40.50.300">
    <property type="entry name" value="P-loop containing nucleotide triphosphate hydrolases"/>
    <property type="match status" value="2"/>
</dbReference>
<dbReference type="HAMAP" id="MF_00195">
    <property type="entry name" value="GTPase_Der"/>
    <property type="match status" value="1"/>
</dbReference>
<dbReference type="InterPro" id="IPR003593">
    <property type="entry name" value="AAA+_ATPase"/>
</dbReference>
<dbReference type="InterPro" id="IPR031166">
    <property type="entry name" value="G_ENGA"/>
</dbReference>
<dbReference type="InterPro" id="IPR006073">
    <property type="entry name" value="GTP-bd"/>
</dbReference>
<dbReference type="InterPro" id="IPR016484">
    <property type="entry name" value="GTPase_Der"/>
</dbReference>
<dbReference type="InterPro" id="IPR032859">
    <property type="entry name" value="KH_dom-like"/>
</dbReference>
<dbReference type="InterPro" id="IPR015946">
    <property type="entry name" value="KH_dom-like_a/b"/>
</dbReference>
<dbReference type="InterPro" id="IPR027417">
    <property type="entry name" value="P-loop_NTPase"/>
</dbReference>
<dbReference type="InterPro" id="IPR005225">
    <property type="entry name" value="Small_GTP-bd"/>
</dbReference>
<dbReference type="NCBIfam" id="TIGR03594">
    <property type="entry name" value="GTPase_EngA"/>
    <property type="match status" value="1"/>
</dbReference>
<dbReference type="NCBIfam" id="TIGR00231">
    <property type="entry name" value="small_GTP"/>
    <property type="match status" value="2"/>
</dbReference>
<dbReference type="PANTHER" id="PTHR43834">
    <property type="entry name" value="GTPASE DER"/>
    <property type="match status" value="1"/>
</dbReference>
<dbReference type="PANTHER" id="PTHR43834:SF6">
    <property type="entry name" value="GTPASE DER"/>
    <property type="match status" value="1"/>
</dbReference>
<dbReference type="Pfam" id="PF14714">
    <property type="entry name" value="KH_dom-like"/>
    <property type="match status" value="1"/>
</dbReference>
<dbReference type="Pfam" id="PF01926">
    <property type="entry name" value="MMR_HSR1"/>
    <property type="match status" value="2"/>
</dbReference>
<dbReference type="PIRSF" id="PIRSF006485">
    <property type="entry name" value="GTP-binding_EngA"/>
    <property type="match status" value="1"/>
</dbReference>
<dbReference type="PRINTS" id="PR00326">
    <property type="entry name" value="GTP1OBG"/>
</dbReference>
<dbReference type="SMART" id="SM00382">
    <property type="entry name" value="AAA"/>
    <property type="match status" value="2"/>
</dbReference>
<dbReference type="SUPFAM" id="SSF52540">
    <property type="entry name" value="P-loop containing nucleoside triphosphate hydrolases"/>
    <property type="match status" value="2"/>
</dbReference>
<dbReference type="PROSITE" id="PS51712">
    <property type="entry name" value="G_ENGA"/>
    <property type="match status" value="2"/>
</dbReference>
<feature type="chain" id="PRO_1000011783" description="GTPase Der">
    <location>
        <begin position="1"/>
        <end position="465"/>
    </location>
</feature>
<feature type="domain" description="EngA-type G 1">
    <location>
        <begin position="3"/>
        <end position="167"/>
    </location>
</feature>
<feature type="domain" description="EngA-type G 2">
    <location>
        <begin position="179"/>
        <end position="352"/>
    </location>
</feature>
<feature type="domain" description="KH-like" evidence="1">
    <location>
        <begin position="353"/>
        <end position="437"/>
    </location>
</feature>
<feature type="binding site" evidence="1">
    <location>
        <begin position="9"/>
        <end position="16"/>
    </location>
    <ligand>
        <name>GTP</name>
        <dbReference type="ChEBI" id="CHEBI:37565"/>
        <label>1</label>
    </ligand>
</feature>
<feature type="binding site" evidence="1">
    <location>
        <begin position="57"/>
        <end position="61"/>
    </location>
    <ligand>
        <name>GTP</name>
        <dbReference type="ChEBI" id="CHEBI:37565"/>
        <label>1</label>
    </ligand>
</feature>
<feature type="binding site" evidence="1">
    <location>
        <begin position="119"/>
        <end position="122"/>
    </location>
    <ligand>
        <name>GTP</name>
        <dbReference type="ChEBI" id="CHEBI:37565"/>
        <label>1</label>
    </ligand>
</feature>
<feature type="binding site" evidence="1">
    <location>
        <begin position="185"/>
        <end position="192"/>
    </location>
    <ligand>
        <name>GTP</name>
        <dbReference type="ChEBI" id="CHEBI:37565"/>
        <label>2</label>
    </ligand>
</feature>
<feature type="binding site" evidence="1">
    <location>
        <begin position="232"/>
        <end position="236"/>
    </location>
    <ligand>
        <name>GTP</name>
        <dbReference type="ChEBI" id="CHEBI:37565"/>
        <label>2</label>
    </ligand>
</feature>
<feature type="binding site" evidence="1">
    <location>
        <begin position="297"/>
        <end position="300"/>
    </location>
    <ligand>
        <name>GTP</name>
        <dbReference type="ChEBI" id="CHEBI:37565"/>
        <label>2</label>
    </ligand>
</feature>
<organism>
    <name type="scientific">Xanthomonas campestris pv. campestris (strain 8004)</name>
    <dbReference type="NCBI Taxonomy" id="314565"/>
    <lineage>
        <taxon>Bacteria</taxon>
        <taxon>Pseudomonadati</taxon>
        <taxon>Pseudomonadota</taxon>
        <taxon>Gammaproteobacteria</taxon>
        <taxon>Lysobacterales</taxon>
        <taxon>Lysobacteraceae</taxon>
        <taxon>Xanthomonas</taxon>
    </lineage>
</organism>
<evidence type="ECO:0000255" key="1">
    <source>
        <dbReference type="HAMAP-Rule" id="MF_00195"/>
    </source>
</evidence>